<comment type="function">
    <text evidence="1">Endonuclease that specifically degrades the RNA of RNA-DNA hybrids.</text>
</comment>
<comment type="catalytic activity">
    <reaction evidence="1">
        <text>Endonucleolytic cleavage to 5'-phosphomonoester.</text>
        <dbReference type="EC" id="3.1.26.4"/>
    </reaction>
</comment>
<comment type="cofactor">
    <cofactor evidence="1">
        <name>Mg(2+)</name>
        <dbReference type="ChEBI" id="CHEBI:18420"/>
    </cofactor>
    <text evidence="1">Binds 1 Mg(2+) ion per subunit. May bind a second metal ion at a regulatory site, or after substrate binding.</text>
</comment>
<comment type="subunit">
    <text evidence="1">Monomer.</text>
</comment>
<comment type="subcellular location">
    <subcellularLocation>
        <location evidence="1">Cytoplasm</location>
    </subcellularLocation>
</comment>
<comment type="similarity">
    <text evidence="1">Belongs to the RNase H family.</text>
</comment>
<name>RNH_SHIB3</name>
<organism>
    <name type="scientific">Shigella boydii serotype 18 (strain CDC 3083-94 / BS512)</name>
    <dbReference type="NCBI Taxonomy" id="344609"/>
    <lineage>
        <taxon>Bacteria</taxon>
        <taxon>Pseudomonadati</taxon>
        <taxon>Pseudomonadota</taxon>
        <taxon>Gammaproteobacteria</taxon>
        <taxon>Enterobacterales</taxon>
        <taxon>Enterobacteriaceae</taxon>
        <taxon>Shigella</taxon>
    </lineage>
</organism>
<feature type="chain" id="PRO_1000090920" description="Ribonuclease H">
    <location>
        <begin position="1"/>
        <end position="155"/>
    </location>
</feature>
<feature type="domain" description="RNase H type-1" evidence="2">
    <location>
        <begin position="1"/>
        <end position="142"/>
    </location>
</feature>
<feature type="binding site" evidence="1">
    <location>
        <position position="10"/>
    </location>
    <ligand>
        <name>Mg(2+)</name>
        <dbReference type="ChEBI" id="CHEBI:18420"/>
        <label>1</label>
    </ligand>
</feature>
<feature type="binding site" evidence="1">
    <location>
        <position position="10"/>
    </location>
    <ligand>
        <name>Mg(2+)</name>
        <dbReference type="ChEBI" id="CHEBI:18420"/>
        <label>2</label>
    </ligand>
</feature>
<feature type="binding site" evidence="1">
    <location>
        <position position="48"/>
    </location>
    <ligand>
        <name>Mg(2+)</name>
        <dbReference type="ChEBI" id="CHEBI:18420"/>
        <label>1</label>
    </ligand>
</feature>
<feature type="binding site" evidence="1">
    <location>
        <position position="70"/>
    </location>
    <ligand>
        <name>Mg(2+)</name>
        <dbReference type="ChEBI" id="CHEBI:18420"/>
        <label>1</label>
    </ligand>
</feature>
<feature type="binding site" evidence="1">
    <location>
        <position position="134"/>
    </location>
    <ligand>
        <name>Mg(2+)</name>
        <dbReference type="ChEBI" id="CHEBI:18420"/>
        <label>2</label>
    </ligand>
</feature>
<protein>
    <recommendedName>
        <fullName evidence="1">Ribonuclease H</fullName>
        <shortName evidence="1">RNase H</shortName>
        <ecNumber evidence="1">3.1.26.4</ecNumber>
    </recommendedName>
</protein>
<accession>B2U352</accession>
<reference key="1">
    <citation type="submission" date="2008-05" db="EMBL/GenBank/DDBJ databases">
        <title>Complete sequence of Shigella boydii serotype 18 strain BS512.</title>
        <authorList>
            <person name="Rasko D.A."/>
            <person name="Rosovitz M."/>
            <person name="Maurelli A.T."/>
            <person name="Myers G."/>
            <person name="Seshadri R."/>
            <person name="Cer R."/>
            <person name="Jiang L."/>
            <person name="Ravel J."/>
            <person name="Sebastian Y."/>
        </authorList>
    </citation>
    <scope>NUCLEOTIDE SEQUENCE [LARGE SCALE GENOMIC DNA]</scope>
    <source>
        <strain>CDC 3083-94 / BS512</strain>
    </source>
</reference>
<keyword id="KW-0963">Cytoplasm</keyword>
<keyword id="KW-0255">Endonuclease</keyword>
<keyword id="KW-0378">Hydrolase</keyword>
<keyword id="KW-0460">Magnesium</keyword>
<keyword id="KW-0479">Metal-binding</keyword>
<keyword id="KW-0540">Nuclease</keyword>
<keyword id="KW-1185">Reference proteome</keyword>
<dbReference type="EC" id="3.1.26.4" evidence="1"/>
<dbReference type="EMBL" id="CP001063">
    <property type="protein sequence ID" value="ACD06826.1"/>
    <property type="molecule type" value="Genomic_DNA"/>
</dbReference>
<dbReference type="RefSeq" id="WP_000917883.1">
    <property type="nucleotide sequence ID" value="NC_010658.1"/>
</dbReference>
<dbReference type="SMR" id="B2U352"/>
<dbReference type="STRING" id="344609.SbBS512_E0209"/>
<dbReference type="GeneID" id="93777209"/>
<dbReference type="KEGG" id="sbc:SbBS512_E0209"/>
<dbReference type="HOGENOM" id="CLU_030894_6_0_6"/>
<dbReference type="Proteomes" id="UP000001030">
    <property type="component" value="Chromosome"/>
</dbReference>
<dbReference type="GO" id="GO:0005737">
    <property type="term" value="C:cytoplasm"/>
    <property type="evidence" value="ECO:0007669"/>
    <property type="project" value="UniProtKB-SubCell"/>
</dbReference>
<dbReference type="GO" id="GO:0000287">
    <property type="term" value="F:magnesium ion binding"/>
    <property type="evidence" value="ECO:0007669"/>
    <property type="project" value="UniProtKB-UniRule"/>
</dbReference>
<dbReference type="GO" id="GO:0003676">
    <property type="term" value="F:nucleic acid binding"/>
    <property type="evidence" value="ECO:0007669"/>
    <property type="project" value="InterPro"/>
</dbReference>
<dbReference type="GO" id="GO:0004523">
    <property type="term" value="F:RNA-DNA hybrid ribonuclease activity"/>
    <property type="evidence" value="ECO:0007669"/>
    <property type="project" value="UniProtKB-UniRule"/>
</dbReference>
<dbReference type="GO" id="GO:0043137">
    <property type="term" value="P:DNA replication, removal of RNA primer"/>
    <property type="evidence" value="ECO:0007669"/>
    <property type="project" value="TreeGrafter"/>
</dbReference>
<dbReference type="CDD" id="cd09278">
    <property type="entry name" value="RNase_HI_prokaryote_like"/>
    <property type="match status" value="1"/>
</dbReference>
<dbReference type="FunFam" id="3.30.420.10:FF:000008">
    <property type="entry name" value="Ribonuclease H"/>
    <property type="match status" value="1"/>
</dbReference>
<dbReference type="Gene3D" id="3.30.420.10">
    <property type="entry name" value="Ribonuclease H-like superfamily/Ribonuclease H"/>
    <property type="match status" value="1"/>
</dbReference>
<dbReference type="HAMAP" id="MF_00042">
    <property type="entry name" value="RNase_H"/>
    <property type="match status" value="1"/>
</dbReference>
<dbReference type="InterPro" id="IPR050092">
    <property type="entry name" value="RNase_H"/>
</dbReference>
<dbReference type="InterPro" id="IPR012337">
    <property type="entry name" value="RNaseH-like_sf"/>
</dbReference>
<dbReference type="InterPro" id="IPR002156">
    <property type="entry name" value="RNaseH_domain"/>
</dbReference>
<dbReference type="InterPro" id="IPR036397">
    <property type="entry name" value="RNaseH_sf"/>
</dbReference>
<dbReference type="InterPro" id="IPR022892">
    <property type="entry name" value="RNaseHI"/>
</dbReference>
<dbReference type="NCBIfam" id="NF001236">
    <property type="entry name" value="PRK00203.1"/>
    <property type="match status" value="1"/>
</dbReference>
<dbReference type="PANTHER" id="PTHR10642">
    <property type="entry name" value="RIBONUCLEASE H1"/>
    <property type="match status" value="1"/>
</dbReference>
<dbReference type="PANTHER" id="PTHR10642:SF26">
    <property type="entry name" value="RIBONUCLEASE H1"/>
    <property type="match status" value="1"/>
</dbReference>
<dbReference type="Pfam" id="PF00075">
    <property type="entry name" value="RNase_H"/>
    <property type="match status" value="1"/>
</dbReference>
<dbReference type="SUPFAM" id="SSF53098">
    <property type="entry name" value="Ribonuclease H-like"/>
    <property type="match status" value="1"/>
</dbReference>
<dbReference type="PROSITE" id="PS50879">
    <property type="entry name" value="RNASE_H_1"/>
    <property type="match status" value="1"/>
</dbReference>
<evidence type="ECO:0000255" key="1">
    <source>
        <dbReference type="HAMAP-Rule" id="MF_00042"/>
    </source>
</evidence>
<evidence type="ECO:0000255" key="2">
    <source>
        <dbReference type="PROSITE-ProRule" id="PRU00408"/>
    </source>
</evidence>
<gene>
    <name evidence="1" type="primary">rnhA</name>
    <name type="ordered locus">SbBS512_E0209</name>
</gene>
<proteinExistence type="inferred from homology"/>
<sequence>MLKQVEIFTDGSCLGNPGPGGYGAILRYRGREKTFSAGYTRTTNNRMELMAAIVALEALKEHCEVILSTDSQYVRQGITQWIHNWKKRGWKTADKKPVKNVDLWQRLDAALGQHQIKWEWVKGHAGHPENERCDELARAAAMNPTLEDTGYQVEV</sequence>